<sequence>MAAGPRNSMLLVFALLSLPWPQEVGAFPAMPLSSLFANAVLRAQHLHQLAADTYKDFERAYIPEGQRYSIQNAQAAFCFSETIPAPTGKDEAQQRSDMELLRFSLLLIQSWLGPVQFLSRVFTNSLVFGTSDRVYEKLKDLEEGIQALMRELEDGSPRAGPILKQTYDKFDTNLRSDDALLKNYGLLSCFKKDLHKAETYLRVMKCRRFVESSCAF</sequence>
<feature type="signal peptide" evidence="1">
    <location>
        <begin position="1"/>
        <end position="26"/>
    </location>
</feature>
<feature type="chain" id="PRO_0000032993" description="Somatotropin">
    <location>
        <begin position="27"/>
        <end position="216"/>
    </location>
</feature>
<feature type="binding site" evidence="1">
    <location>
        <position position="45"/>
    </location>
    <ligand>
        <name>Zn(2+)</name>
        <dbReference type="ChEBI" id="CHEBI:29105"/>
    </ligand>
</feature>
<feature type="binding site" evidence="1">
    <location>
        <position position="198"/>
    </location>
    <ligand>
        <name>Zn(2+)</name>
        <dbReference type="ChEBI" id="CHEBI:29105"/>
    </ligand>
</feature>
<feature type="modified residue" description="Phosphoserine" evidence="2">
    <location>
        <position position="131"/>
    </location>
</feature>
<feature type="disulfide bond" evidence="1">
    <location>
        <begin position="78"/>
        <end position="189"/>
    </location>
</feature>
<feature type="disulfide bond" evidence="1">
    <location>
        <begin position="206"/>
        <end position="214"/>
    </location>
</feature>
<evidence type="ECO:0000250" key="1"/>
<evidence type="ECO:0000250" key="2">
    <source>
        <dbReference type="UniProtKB" id="P01241"/>
    </source>
</evidence>
<evidence type="ECO:0000305" key="3"/>
<gene>
    <name type="primary">GH1</name>
    <name type="synonym">GH</name>
</gene>
<name>SOMA_NEOVI</name>
<keyword id="KW-1015">Disulfide bond</keyword>
<keyword id="KW-0372">Hormone</keyword>
<keyword id="KW-0479">Metal-binding</keyword>
<keyword id="KW-0597">Phosphoprotein</keyword>
<keyword id="KW-1185">Reference proteome</keyword>
<keyword id="KW-0964">Secreted</keyword>
<keyword id="KW-0732">Signal</keyword>
<keyword id="KW-0862">Zinc</keyword>
<reference key="1">
    <citation type="journal article" date="1990" name="Nucleic Acids Res.">
        <title>Cloning and nucleotide sequence of a cDNA encoding the mink growth hormone.</title>
        <authorList>
            <person name="Shoji K."/>
            <person name="Ohara E."/>
            <person name="Watahiki M."/>
            <person name="Yoneda Y."/>
        </authorList>
    </citation>
    <scope>NUCLEOTIDE SEQUENCE [MRNA]</scope>
    <source>
        <tissue>Pituitary</tissue>
    </source>
</reference>
<reference key="2">
    <citation type="submission" date="2004-04" db="EMBL/GenBank/DDBJ databases">
        <authorList>
            <person name="Perelygina L.M."/>
            <person name="Baricheva E.M."/>
            <person name="Sebeleva T.E."/>
            <person name="Kokoza V.A."/>
        </authorList>
    </citation>
    <scope>NUCLEOTIDE SEQUENCE [MRNA] OF 12-216</scope>
</reference>
<reference key="3">
    <citation type="journal article" date="1990" name="Biochem. Biophys. Res. Commun.">
        <title>Cloning and sequence analysis of mink growth hormone cDNA.</title>
        <authorList>
            <person name="Harada Y."/>
            <person name="Tatsumi H."/>
            <person name="Nakano E."/>
            <person name="Umezu M."/>
        </authorList>
    </citation>
    <scope>NUCLEOTIDE SEQUENCE [MRNA] OF 27-216</scope>
</reference>
<proteinExistence type="evidence at transcript level"/>
<organism>
    <name type="scientific">Neovison vison</name>
    <name type="common">American mink</name>
    <name type="synonym">Mustela vison</name>
    <dbReference type="NCBI Taxonomy" id="452646"/>
    <lineage>
        <taxon>Eukaryota</taxon>
        <taxon>Metazoa</taxon>
        <taxon>Chordata</taxon>
        <taxon>Craniata</taxon>
        <taxon>Vertebrata</taxon>
        <taxon>Euteleostomi</taxon>
        <taxon>Mammalia</taxon>
        <taxon>Eutheria</taxon>
        <taxon>Laurasiatheria</taxon>
        <taxon>Carnivora</taxon>
        <taxon>Caniformia</taxon>
        <taxon>Musteloidea</taxon>
        <taxon>Mustelidae</taxon>
        <taxon>Mustelinae</taxon>
        <taxon>Neogale</taxon>
    </lineage>
</organism>
<comment type="function">
    <text>Plays an important role in growth control. Its major role in stimulating body growth is to stimulate the liver and other tissues to secrete IGF1. It stimulates both the differentiation and proliferation of myoblasts. It also stimulates amino acid uptake and protein synthesis in muscle and other tissues.</text>
</comment>
<comment type="subcellular location">
    <subcellularLocation>
        <location>Secreted</location>
    </subcellularLocation>
</comment>
<comment type="similarity">
    <text evidence="3">Belongs to the somatotropin/prolactin family.</text>
</comment>
<accession>P19795</accession>
<dbReference type="EMBL" id="X56120">
    <property type="protein sequence ID" value="CAA39585.1"/>
    <property type="molecule type" value="mRNA"/>
</dbReference>
<dbReference type="EMBL" id="X59786">
    <property type="protein sequence ID" value="CAA42448.2"/>
    <property type="molecule type" value="mRNA"/>
</dbReference>
<dbReference type="EMBL" id="M62901">
    <property type="protein sequence ID" value="AAA30964.1"/>
    <property type="molecule type" value="mRNA"/>
</dbReference>
<dbReference type="PIR" id="S12128">
    <property type="entry name" value="A37782"/>
</dbReference>
<dbReference type="SMR" id="P19795"/>
<dbReference type="Ensembl" id="ENSNVIT00000035564.1">
    <property type="protein sequence ID" value="ENSNVIP00000030700.1"/>
    <property type="gene ID" value="ENSNVIG00000023639.1"/>
</dbReference>
<dbReference type="GeneTree" id="ENSGT00950000182818"/>
<dbReference type="Proteomes" id="UP000694425">
    <property type="component" value="Unplaced"/>
</dbReference>
<dbReference type="GO" id="GO:0005615">
    <property type="term" value="C:extracellular space"/>
    <property type="evidence" value="ECO:0007669"/>
    <property type="project" value="InterPro"/>
</dbReference>
<dbReference type="GO" id="GO:0008083">
    <property type="term" value="F:growth factor activity"/>
    <property type="evidence" value="ECO:0007669"/>
    <property type="project" value="TreeGrafter"/>
</dbReference>
<dbReference type="GO" id="GO:0005131">
    <property type="term" value="F:growth hormone receptor binding"/>
    <property type="evidence" value="ECO:0007669"/>
    <property type="project" value="InterPro"/>
</dbReference>
<dbReference type="GO" id="GO:0005179">
    <property type="term" value="F:hormone activity"/>
    <property type="evidence" value="ECO:0007669"/>
    <property type="project" value="UniProtKB-KW"/>
</dbReference>
<dbReference type="GO" id="GO:0046872">
    <property type="term" value="F:metal ion binding"/>
    <property type="evidence" value="ECO:0007669"/>
    <property type="project" value="UniProtKB-KW"/>
</dbReference>
<dbReference type="GO" id="GO:0048513">
    <property type="term" value="P:animal organ development"/>
    <property type="evidence" value="ECO:0007669"/>
    <property type="project" value="TreeGrafter"/>
</dbReference>
<dbReference type="GO" id="GO:0060396">
    <property type="term" value="P:growth hormone receptor signaling pathway"/>
    <property type="evidence" value="ECO:0007669"/>
    <property type="project" value="TreeGrafter"/>
</dbReference>
<dbReference type="GO" id="GO:0045927">
    <property type="term" value="P:positive regulation of growth"/>
    <property type="evidence" value="ECO:0007669"/>
    <property type="project" value="TreeGrafter"/>
</dbReference>
<dbReference type="GO" id="GO:0046427">
    <property type="term" value="P:positive regulation of receptor signaling pathway via JAK-STAT"/>
    <property type="evidence" value="ECO:0007669"/>
    <property type="project" value="TreeGrafter"/>
</dbReference>
<dbReference type="GO" id="GO:0031667">
    <property type="term" value="P:response to nutrient levels"/>
    <property type="evidence" value="ECO:0007669"/>
    <property type="project" value="TreeGrafter"/>
</dbReference>
<dbReference type="CDD" id="cd10285">
    <property type="entry name" value="somatotropin_like"/>
    <property type="match status" value="1"/>
</dbReference>
<dbReference type="FunFam" id="1.20.1250.10:FF:000002">
    <property type="entry name" value="Growth hormone"/>
    <property type="match status" value="1"/>
</dbReference>
<dbReference type="Gene3D" id="1.20.1250.10">
    <property type="match status" value="1"/>
</dbReference>
<dbReference type="InterPro" id="IPR009079">
    <property type="entry name" value="4_helix_cytokine-like_core"/>
</dbReference>
<dbReference type="InterPro" id="IPR034975">
    <property type="entry name" value="Somatotropin"/>
</dbReference>
<dbReference type="InterPro" id="IPR001400">
    <property type="entry name" value="Somatotropin/Prolactin"/>
</dbReference>
<dbReference type="InterPro" id="IPR018116">
    <property type="entry name" value="Somatotropin_CS"/>
</dbReference>
<dbReference type="PANTHER" id="PTHR11417:SF2">
    <property type="entry name" value="SOMATOTROPIN"/>
    <property type="match status" value="1"/>
</dbReference>
<dbReference type="PANTHER" id="PTHR11417">
    <property type="entry name" value="SOMATOTROPIN,PROLACTIN"/>
    <property type="match status" value="1"/>
</dbReference>
<dbReference type="Pfam" id="PF00103">
    <property type="entry name" value="Hormone_1"/>
    <property type="match status" value="1"/>
</dbReference>
<dbReference type="PRINTS" id="PR00836">
    <property type="entry name" value="SOMATOTROPIN"/>
</dbReference>
<dbReference type="SUPFAM" id="SSF47266">
    <property type="entry name" value="4-helical cytokines"/>
    <property type="match status" value="1"/>
</dbReference>
<dbReference type="PROSITE" id="PS00266">
    <property type="entry name" value="SOMATOTROPIN_1"/>
    <property type="match status" value="1"/>
</dbReference>
<dbReference type="PROSITE" id="PS00338">
    <property type="entry name" value="SOMATOTROPIN_2"/>
    <property type="match status" value="1"/>
</dbReference>
<protein>
    <recommendedName>
        <fullName>Somatotropin</fullName>
    </recommendedName>
    <alternativeName>
        <fullName>Growth hormone</fullName>
    </alternativeName>
</protein>